<feature type="chain" id="PRO_1000046621" description="Ribonuclease P protein component 2">
    <location>
        <begin position="1"/>
        <end position="135"/>
    </location>
</feature>
<name>RNP2_METBF</name>
<protein>
    <recommendedName>
        <fullName evidence="1">Ribonuclease P protein component 2</fullName>
        <shortName evidence="1">RNase P component 2</shortName>
        <ecNumber evidence="1">3.1.26.5</ecNumber>
    </recommendedName>
    <alternativeName>
        <fullName evidence="1">Pop5</fullName>
    </alternativeName>
</protein>
<keyword id="KW-0963">Cytoplasm</keyword>
<keyword id="KW-0255">Endonuclease</keyword>
<keyword id="KW-0378">Hydrolase</keyword>
<keyword id="KW-0540">Nuclease</keyword>
<keyword id="KW-0819">tRNA processing</keyword>
<comment type="function">
    <text evidence="1">Part of ribonuclease P, a protein complex that generates mature tRNA molecules by cleaving their 5'-ends.</text>
</comment>
<comment type="catalytic activity">
    <reaction evidence="1">
        <text>Endonucleolytic cleavage of RNA, removing 5'-extranucleotides from tRNA precursor.</text>
        <dbReference type="EC" id="3.1.26.5"/>
    </reaction>
</comment>
<comment type="subunit">
    <text evidence="1">Consists of a catalytic RNA component and at least 4-5 protein subunits.</text>
</comment>
<comment type="subcellular location">
    <subcellularLocation>
        <location evidence="1">Cytoplasm</location>
    </subcellularLocation>
</comment>
<comment type="similarity">
    <text evidence="1">Belongs to the eukaryotic/archaeal RNase P protein component 2 family.</text>
</comment>
<dbReference type="EC" id="3.1.26.5" evidence="1"/>
<dbReference type="EMBL" id="CP000099">
    <property type="protein sequence ID" value="AAZ71415.1"/>
    <property type="molecule type" value="Genomic_DNA"/>
</dbReference>
<dbReference type="SMR" id="Q469M7"/>
<dbReference type="STRING" id="269797.Mbar_A2502"/>
<dbReference type="PaxDb" id="269797-Mbar_A2502"/>
<dbReference type="KEGG" id="mba:Mbar_A2502"/>
<dbReference type="eggNOG" id="arCOG01365">
    <property type="taxonomic scope" value="Archaea"/>
</dbReference>
<dbReference type="HOGENOM" id="CLU_137733_1_0_2"/>
<dbReference type="OrthoDB" id="19261at2157"/>
<dbReference type="GO" id="GO:0005737">
    <property type="term" value="C:cytoplasm"/>
    <property type="evidence" value="ECO:0007669"/>
    <property type="project" value="UniProtKB-SubCell"/>
</dbReference>
<dbReference type="GO" id="GO:0030677">
    <property type="term" value="C:ribonuclease P complex"/>
    <property type="evidence" value="ECO:0007669"/>
    <property type="project" value="UniProtKB-UniRule"/>
</dbReference>
<dbReference type="GO" id="GO:0004526">
    <property type="term" value="F:ribonuclease P activity"/>
    <property type="evidence" value="ECO:0007669"/>
    <property type="project" value="UniProtKB-UniRule"/>
</dbReference>
<dbReference type="GO" id="GO:0001682">
    <property type="term" value="P:tRNA 5'-leader removal"/>
    <property type="evidence" value="ECO:0007669"/>
    <property type="project" value="UniProtKB-UniRule"/>
</dbReference>
<dbReference type="Gene3D" id="3.30.70.3250">
    <property type="entry name" value="Ribonuclease P, Pop5 subunit"/>
    <property type="match status" value="1"/>
</dbReference>
<dbReference type="HAMAP" id="MF_00755">
    <property type="entry name" value="RNase_P_2"/>
    <property type="match status" value="1"/>
</dbReference>
<dbReference type="InterPro" id="IPR002759">
    <property type="entry name" value="Pop5/Rpp14/Rnp2-like"/>
</dbReference>
<dbReference type="InterPro" id="IPR038085">
    <property type="entry name" value="Rnp2-like_sf"/>
</dbReference>
<dbReference type="InterPro" id="IPR016434">
    <property type="entry name" value="Rnp2_archaea"/>
</dbReference>
<dbReference type="PANTHER" id="PTHR15441">
    <property type="entry name" value="RIBONUCLEASE P PROTEIN SUBUNIT P14"/>
    <property type="match status" value="1"/>
</dbReference>
<dbReference type="PANTHER" id="PTHR15441:SF2">
    <property type="entry name" value="RIBONUCLEASE P_MRP PROTEIN SUBUNIT POP5"/>
    <property type="match status" value="1"/>
</dbReference>
<dbReference type="Pfam" id="PF01900">
    <property type="entry name" value="RNase_P_Rpp14"/>
    <property type="match status" value="1"/>
</dbReference>
<dbReference type="PIRSF" id="PIRSF004952">
    <property type="entry name" value="RNase_P_2"/>
    <property type="match status" value="1"/>
</dbReference>
<dbReference type="SUPFAM" id="SSF160350">
    <property type="entry name" value="Rnp2-like"/>
    <property type="match status" value="1"/>
</dbReference>
<sequence>MKRLLPSLRAKKRYLAFELISEVPVSRSDLVKEVMFSASSLLGDVTASECDIKVLGFEESKGIIQCAHTKVKETRASMATLTRINGKRATVHILGTSGTIKRATEKFLQNTAFEPEIRINPKRLKNNNLSRVQES</sequence>
<reference key="1">
    <citation type="journal article" date="2006" name="J. Bacteriol.">
        <title>The Methanosarcina barkeri genome: comparative analysis with Methanosarcina acetivorans and Methanosarcina mazei reveals extensive rearrangement within methanosarcinal genomes.</title>
        <authorList>
            <person name="Maeder D.L."/>
            <person name="Anderson I."/>
            <person name="Brettin T.S."/>
            <person name="Bruce D.C."/>
            <person name="Gilna P."/>
            <person name="Han C.S."/>
            <person name="Lapidus A."/>
            <person name="Metcalf W.W."/>
            <person name="Saunders E."/>
            <person name="Tapia R."/>
            <person name="Sowers K.R."/>
        </authorList>
    </citation>
    <scope>NUCLEOTIDE SEQUENCE [LARGE SCALE GENOMIC DNA]</scope>
    <source>
        <strain>Fusaro / DSM 804</strain>
    </source>
</reference>
<evidence type="ECO:0000255" key="1">
    <source>
        <dbReference type="HAMAP-Rule" id="MF_00755"/>
    </source>
</evidence>
<accession>Q469M7</accession>
<organism>
    <name type="scientific">Methanosarcina barkeri (strain Fusaro / DSM 804)</name>
    <dbReference type="NCBI Taxonomy" id="269797"/>
    <lineage>
        <taxon>Archaea</taxon>
        <taxon>Methanobacteriati</taxon>
        <taxon>Methanobacteriota</taxon>
        <taxon>Stenosarchaea group</taxon>
        <taxon>Methanomicrobia</taxon>
        <taxon>Methanosarcinales</taxon>
        <taxon>Methanosarcinaceae</taxon>
        <taxon>Methanosarcina</taxon>
    </lineage>
</organism>
<proteinExistence type="inferred from homology"/>
<gene>
    <name evidence="1" type="primary">rnp2</name>
    <name type="ordered locus">Mbar_A2502</name>
</gene>